<reference key="1">
    <citation type="journal article" date="2007" name="PLoS ONE">
        <title>Analysis of the neurotoxin complex genes in Clostridium botulinum A1-A4 and B1 strains: BoNT/A3, /Ba4 and /B1 clusters are located within plasmids.</title>
        <authorList>
            <person name="Smith T.J."/>
            <person name="Hill K.K."/>
            <person name="Foley B.T."/>
            <person name="Detter J.C."/>
            <person name="Munk A.C."/>
            <person name="Bruce D.C."/>
            <person name="Doggett N.A."/>
            <person name="Smith L.A."/>
            <person name="Marks J.D."/>
            <person name="Xie G."/>
            <person name="Brettin T.S."/>
        </authorList>
    </citation>
    <scope>NUCLEOTIDE SEQUENCE [LARGE SCALE GENOMIC DNA]</scope>
    <source>
        <strain>Okra / Type B1</strain>
    </source>
</reference>
<protein>
    <recommendedName>
        <fullName evidence="1">Histidine--tRNA ligase</fullName>
        <ecNumber evidence="1">6.1.1.21</ecNumber>
    </recommendedName>
    <alternativeName>
        <fullName evidence="1">Histidyl-tRNA synthetase</fullName>
        <shortName evidence="1">HisRS</shortName>
    </alternativeName>
</protein>
<sequence>MSLQAPKGTKDLLPTESYKWQYLENKFRNIAADFGCREIRTPVFEYTELFQRGVGETTDVVQKEMYTFEDKAGRSITLKPEGTSPAVRAFVEGRLFNETQPTKMYYFTPVMRYENVQKGRLRQHHQFGIEIFGAKDASVDAEVISIPVGIYKELGVEGVELNINSIGCPKCRKTYNEALKKYLSKNYDKLCSTCKTRFDKNPLRILDCKVDTCKEIVKDAPIILDYICDECKDHFESLKSYLDVLDIKYKVDPFIVRGLDYYSKTVFEFIIDDITICAGGRYDYLIEEIGGPSMPAVGFGMGIERLLLTLQEKAIEIPEEAYVDLYLGNMGDKAKLEVLKLAKELRDRHIKCEIDHMGKSVKAQMKYANRIGAKYSMVLGEEELNTGKVSLKRMEDGKQIEVDIKEIDTLIKVFK</sequence>
<organism>
    <name type="scientific">Clostridium botulinum (strain Okra / Type B1)</name>
    <dbReference type="NCBI Taxonomy" id="498213"/>
    <lineage>
        <taxon>Bacteria</taxon>
        <taxon>Bacillati</taxon>
        <taxon>Bacillota</taxon>
        <taxon>Clostridia</taxon>
        <taxon>Eubacteriales</taxon>
        <taxon>Clostridiaceae</taxon>
        <taxon>Clostridium</taxon>
    </lineage>
</organism>
<comment type="catalytic activity">
    <reaction evidence="1">
        <text>tRNA(His) + L-histidine + ATP = L-histidyl-tRNA(His) + AMP + diphosphate + H(+)</text>
        <dbReference type="Rhea" id="RHEA:17313"/>
        <dbReference type="Rhea" id="RHEA-COMP:9665"/>
        <dbReference type="Rhea" id="RHEA-COMP:9689"/>
        <dbReference type="ChEBI" id="CHEBI:15378"/>
        <dbReference type="ChEBI" id="CHEBI:30616"/>
        <dbReference type="ChEBI" id="CHEBI:33019"/>
        <dbReference type="ChEBI" id="CHEBI:57595"/>
        <dbReference type="ChEBI" id="CHEBI:78442"/>
        <dbReference type="ChEBI" id="CHEBI:78527"/>
        <dbReference type="ChEBI" id="CHEBI:456215"/>
        <dbReference type="EC" id="6.1.1.21"/>
    </reaction>
</comment>
<comment type="subunit">
    <text evidence="1">Homodimer.</text>
</comment>
<comment type="subcellular location">
    <subcellularLocation>
        <location evidence="1">Cytoplasm</location>
    </subcellularLocation>
</comment>
<comment type="similarity">
    <text evidence="1">Belongs to the class-II aminoacyl-tRNA synthetase family.</text>
</comment>
<dbReference type="EC" id="6.1.1.21" evidence="1"/>
<dbReference type="EMBL" id="CP000939">
    <property type="protein sequence ID" value="ACA43566.1"/>
    <property type="molecule type" value="Genomic_DNA"/>
</dbReference>
<dbReference type="RefSeq" id="WP_003403593.1">
    <property type="nucleotide sequence ID" value="NC_010516.1"/>
</dbReference>
<dbReference type="SMR" id="B1IMD8"/>
<dbReference type="KEGG" id="cbb:CLD_1485"/>
<dbReference type="HOGENOM" id="CLU_025113_1_1_9"/>
<dbReference type="Proteomes" id="UP000008541">
    <property type="component" value="Chromosome"/>
</dbReference>
<dbReference type="GO" id="GO:0005737">
    <property type="term" value="C:cytoplasm"/>
    <property type="evidence" value="ECO:0007669"/>
    <property type="project" value="UniProtKB-SubCell"/>
</dbReference>
<dbReference type="GO" id="GO:0005524">
    <property type="term" value="F:ATP binding"/>
    <property type="evidence" value="ECO:0007669"/>
    <property type="project" value="UniProtKB-UniRule"/>
</dbReference>
<dbReference type="GO" id="GO:0140096">
    <property type="term" value="F:catalytic activity, acting on a protein"/>
    <property type="evidence" value="ECO:0007669"/>
    <property type="project" value="UniProtKB-ARBA"/>
</dbReference>
<dbReference type="GO" id="GO:0004821">
    <property type="term" value="F:histidine-tRNA ligase activity"/>
    <property type="evidence" value="ECO:0007669"/>
    <property type="project" value="UniProtKB-UniRule"/>
</dbReference>
<dbReference type="GO" id="GO:0016740">
    <property type="term" value="F:transferase activity"/>
    <property type="evidence" value="ECO:0007669"/>
    <property type="project" value="UniProtKB-ARBA"/>
</dbReference>
<dbReference type="GO" id="GO:0006427">
    <property type="term" value="P:histidyl-tRNA aminoacylation"/>
    <property type="evidence" value="ECO:0007669"/>
    <property type="project" value="UniProtKB-UniRule"/>
</dbReference>
<dbReference type="CDD" id="cd00773">
    <property type="entry name" value="HisRS-like_core"/>
    <property type="match status" value="1"/>
</dbReference>
<dbReference type="CDD" id="cd00859">
    <property type="entry name" value="HisRS_anticodon"/>
    <property type="match status" value="1"/>
</dbReference>
<dbReference type="FunFam" id="3.30.930.10:FF:000005">
    <property type="entry name" value="Histidine--tRNA ligase"/>
    <property type="match status" value="1"/>
</dbReference>
<dbReference type="Gene3D" id="3.40.50.800">
    <property type="entry name" value="Anticodon-binding domain"/>
    <property type="match status" value="1"/>
</dbReference>
<dbReference type="Gene3D" id="3.30.930.10">
    <property type="entry name" value="Bira Bifunctional Protein, Domain 2"/>
    <property type="match status" value="1"/>
</dbReference>
<dbReference type="HAMAP" id="MF_00127">
    <property type="entry name" value="His_tRNA_synth"/>
    <property type="match status" value="1"/>
</dbReference>
<dbReference type="InterPro" id="IPR006195">
    <property type="entry name" value="aa-tRNA-synth_II"/>
</dbReference>
<dbReference type="InterPro" id="IPR045864">
    <property type="entry name" value="aa-tRNA-synth_II/BPL/LPL"/>
</dbReference>
<dbReference type="InterPro" id="IPR004154">
    <property type="entry name" value="Anticodon-bd"/>
</dbReference>
<dbReference type="InterPro" id="IPR036621">
    <property type="entry name" value="Anticodon-bd_dom_sf"/>
</dbReference>
<dbReference type="InterPro" id="IPR015807">
    <property type="entry name" value="His-tRNA-ligase"/>
</dbReference>
<dbReference type="InterPro" id="IPR041715">
    <property type="entry name" value="HisRS-like_core"/>
</dbReference>
<dbReference type="InterPro" id="IPR004516">
    <property type="entry name" value="HisRS/HisZ"/>
</dbReference>
<dbReference type="InterPro" id="IPR033656">
    <property type="entry name" value="HisRS_anticodon"/>
</dbReference>
<dbReference type="NCBIfam" id="TIGR00442">
    <property type="entry name" value="hisS"/>
    <property type="match status" value="1"/>
</dbReference>
<dbReference type="PANTHER" id="PTHR43707:SF1">
    <property type="entry name" value="HISTIDINE--TRNA LIGASE, MITOCHONDRIAL-RELATED"/>
    <property type="match status" value="1"/>
</dbReference>
<dbReference type="PANTHER" id="PTHR43707">
    <property type="entry name" value="HISTIDYL-TRNA SYNTHETASE"/>
    <property type="match status" value="1"/>
</dbReference>
<dbReference type="Pfam" id="PF03129">
    <property type="entry name" value="HGTP_anticodon"/>
    <property type="match status" value="1"/>
</dbReference>
<dbReference type="Pfam" id="PF13393">
    <property type="entry name" value="tRNA-synt_His"/>
    <property type="match status" value="1"/>
</dbReference>
<dbReference type="PIRSF" id="PIRSF001549">
    <property type="entry name" value="His-tRNA_synth"/>
    <property type="match status" value="1"/>
</dbReference>
<dbReference type="SUPFAM" id="SSF52954">
    <property type="entry name" value="Class II aaRS ABD-related"/>
    <property type="match status" value="1"/>
</dbReference>
<dbReference type="SUPFAM" id="SSF55681">
    <property type="entry name" value="Class II aaRS and biotin synthetases"/>
    <property type="match status" value="1"/>
</dbReference>
<dbReference type="PROSITE" id="PS50862">
    <property type="entry name" value="AA_TRNA_LIGASE_II"/>
    <property type="match status" value="1"/>
</dbReference>
<gene>
    <name evidence="1" type="primary">hisS</name>
    <name type="ordered locus">CLD_1485</name>
</gene>
<feature type="chain" id="PRO_1000095541" description="Histidine--tRNA ligase">
    <location>
        <begin position="1"/>
        <end position="415"/>
    </location>
</feature>
<keyword id="KW-0030">Aminoacyl-tRNA synthetase</keyword>
<keyword id="KW-0067">ATP-binding</keyword>
<keyword id="KW-0963">Cytoplasm</keyword>
<keyword id="KW-0436">Ligase</keyword>
<keyword id="KW-0547">Nucleotide-binding</keyword>
<keyword id="KW-0648">Protein biosynthesis</keyword>
<proteinExistence type="inferred from homology"/>
<accession>B1IMD8</accession>
<evidence type="ECO:0000255" key="1">
    <source>
        <dbReference type="HAMAP-Rule" id="MF_00127"/>
    </source>
</evidence>
<name>SYH_CLOBK</name>